<accession>A0RUR1</accession>
<protein>
    <recommendedName>
        <fullName evidence="1">Small ribosomal subunit protein uS7</fullName>
    </recommendedName>
    <alternativeName>
        <fullName evidence="2">30S ribosomal protein S7</fullName>
    </alternativeName>
</protein>
<comment type="function">
    <text evidence="1">One of the primary rRNA binding proteins, it binds directly to 16S rRNA where it nucleates assembly of the head domain of the 30S subunit. Is located at the subunit interface close to the decoding center.</text>
</comment>
<comment type="subunit">
    <text evidence="1">Part of the 30S ribosomal subunit.</text>
</comment>
<comment type="similarity">
    <text evidence="1">Belongs to the universal ribosomal protein uS7 family.</text>
</comment>
<reference key="1">
    <citation type="journal article" date="2006" name="Proc. Natl. Acad. Sci. U.S.A.">
        <title>Genomic analysis of the uncultivated marine crenarchaeote Cenarchaeum symbiosum.</title>
        <authorList>
            <person name="Hallam S.J."/>
            <person name="Konstantinidis K.T."/>
            <person name="Putnam N."/>
            <person name="Schleper C."/>
            <person name="Watanabe Y."/>
            <person name="Sugahara J."/>
            <person name="Preston C."/>
            <person name="de la Torre J."/>
            <person name="Richardson P.M."/>
            <person name="DeLong E.F."/>
        </authorList>
    </citation>
    <scope>NUCLEOTIDE SEQUENCE [LARGE SCALE GENOMIC DNA]</scope>
    <source>
        <strain>A</strain>
    </source>
</reference>
<name>RS7_CENSY</name>
<feature type="chain" id="PRO_0000344309" description="Small ribosomal subunit protein uS7">
    <location>
        <begin position="1"/>
        <end position="199"/>
    </location>
</feature>
<evidence type="ECO:0000255" key="1">
    <source>
        <dbReference type="HAMAP-Rule" id="MF_00480"/>
    </source>
</evidence>
<evidence type="ECO:0000305" key="2"/>
<dbReference type="EMBL" id="DP000238">
    <property type="protein sequence ID" value="ABK77078.1"/>
    <property type="molecule type" value="Genomic_DNA"/>
</dbReference>
<dbReference type="SMR" id="A0RUR1"/>
<dbReference type="STRING" id="414004.CENSYa_0444"/>
<dbReference type="EnsemblBacteria" id="ABK77078">
    <property type="protein sequence ID" value="ABK77078"/>
    <property type="gene ID" value="CENSYa_0444"/>
</dbReference>
<dbReference type="KEGG" id="csy:CENSYa_0444"/>
<dbReference type="PATRIC" id="fig|414004.10.peg.403"/>
<dbReference type="HOGENOM" id="CLU_063975_0_0_2"/>
<dbReference type="Proteomes" id="UP000000758">
    <property type="component" value="Chromosome"/>
</dbReference>
<dbReference type="GO" id="GO:0015935">
    <property type="term" value="C:small ribosomal subunit"/>
    <property type="evidence" value="ECO:0007669"/>
    <property type="project" value="InterPro"/>
</dbReference>
<dbReference type="GO" id="GO:0019843">
    <property type="term" value="F:rRNA binding"/>
    <property type="evidence" value="ECO:0007669"/>
    <property type="project" value="UniProtKB-UniRule"/>
</dbReference>
<dbReference type="GO" id="GO:0003735">
    <property type="term" value="F:structural constituent of ribosome"/>
    <property type="evidence" value="ECO:0007669"/>
    <property type="project" value="InterPro"/>
</dbReference>
<dbReference type="GO" id="GO:0006412">
    <property type="term" value="P:translation"/>
    <property type="evidence" value="ECO:0007669"/>
    <property type="project" value="UniProtKB-UniRule"/>
</dbReference>
<dbReference type="CDD" id="cd14867">
    <property type="entry name" value="uS7_Eukaryote"/>
    <property type="match status" value="1"/>
</dbReference>
<dbReference type="Gene3D" id="1.10.455.10">
    <property type="entry name" value="Ribosomal protein S7 domain"/>
    <property type="match status" value="1"/>
</dbReference>
<dbReference type="HAMAP" id="MF_00480_A">
    <property type="entry name" value="Ribosomal_uS7_A"/>
    <property type="match status" value="1"/>
</dbReference>
<dbReference type="InterPro" id="IPR000235">
    <property type="entry name" value="Ribosomal_uS7"/>
</dbReference>
<dbReference type="InterPro" id="IPR026018">
    <property type="entry name" value="Ribosomal_uS7_arc"/>
</dbReference>
<dbReference type="InterPro" id="IPR023798">
    <property type="entry name" value="Ribosomal_uS7_dom"/>
</dbReference>
<dbReference type="InterPro" id="IPR036823">
    <property type="entry name" value="Ribosomal_uS7_dom_sf"/>
</dbReference>
<dbReference type="InterPro" id="IPR005716">
    <property type="entry name" value="Ribosomal_uS7_euk/arc"/>
</dbReference>
<dbReference type="NCBIfam" id="NF003106">
    <property type="entry name" value="PRK04027.1"/>
    <property type="match status" value="1"/>
</dbReference>
<dbReference type="NCBIfam" id="TIGR01028">
    <property type="entry name" value="uS7_euk_arch"/>
    <property type="match status" value="1"/>
</dbReference>
<dbReference type="PANTHER" id="PTHR11205">
    <property type="entry name" value="RIBOSOMAL PROTEIN S7"/>
    <property type="match status" value="1"/>
</dbReference>
<dbReference type="Pfam" id="PF00177">
    <property type="entry name" value="Ribosomal_S7"/>
    <property type="match status" value="1"/>
</dbReference>
<dbReference type="PIRSF" id="PIRSF002122">
    <property type="entry name" value="RPS7p_RPS7a_RPS5e_RPS7o"/>
    <property type="match status" value="1"/>
</dbReference>
<dbReference type="SUPFAM" id="SSF47973">
    <property type="entry name" value="Ribosomal protein S7"/>
    <property type="match status" value="1"/>
</dbReference>
<gene>
    <name evidence="1" type="primary">rps7</name>
    <name type="ordered locus">CENSYa_0444</name>
</gene>
<keyword id="KW-1185">Reference proteome</keyword>
<keyword id="KW-0687">Ribonucleoprotein</keyword>
<keyword id="KW-0689">Ribosomal protein</keyword>
<keyword id="KW-0694">RNA-binding</keyword>
<keyword id="KW-0699">rRNA-binding</keyword>
<organism>
    <name type="scientific">Cenarchaeum symbiosum (strain A)</name>
    <dbReference type="NCBI Taxonomy" id="414004"/>
    <lineage>
        <taxon>Archaea</taxon>
        <taxon>Nitrososphaerota</taxon>
        <taxon>Candidatus Cenarchaeales</taxon>
        <taxon>Candidatus Cenarchaeaceae</taxon>
        <taxon>Candidatus Cenarchaeum</taxon>
    </lineage>
</organism>
<sequence>MAETQNLLLFRKWDLSDIEVVDPGLKTAISLRKMTLPYTYGRSALKRFNKADANIVERLANKMMHFGKKYAKNTGRMAGKKMGSINTVKTAFEIINLKTGRNPVEVLVRAVENSAPNEDTTRIVYGGTVYHVSVDVSPLRRVDLALRFIADGVKEAAFRKPKSLEEFLAEHLILAANNTTDAPSVKKKNELERIAQASR</sequence>
<proteinExistence type="inferred from homology"/>